<proteinExistence type="evidence at protein level"/>
<organism>
    <name type="scientific">Alteromonas sp. (strain LOR)</name>
    <dbReference type="NCBI Taxonomy" id="1537994"/>
    <lineage>
        <taxon>Bacteria</taxon>
        <taxon>Pseudomonadati</taxon>
        <taxon>Pseudomonadota</taxon>
        <taxon>Gammaproteobacteria</taxon>
        <taxon>Alteromonadales</taxon>
        <taxon>Alteromonadaceae</taxon>
        <taxon>Alteromonas/Salinimonas group</taxon>
        <taxon>Alteromonas</taxon>
    </lineage>
</organism>
<gene>
    <name type="ORF">LOR_34</name>
</gene>
<sequence length="920" mass="103904">MCVVRTFWFAVLTVIFAVSCSSHSVIENDKPTSLKVGEGFVNPLGYYEASPRFSWKPSISNSKSTQQSAYQIQVSSTPEGLLTNPDKWDSEKIKSSAMSWVQYKGKKITSREKVFWRVRFWDENNIASQWSDVAHIEMGLLENLDWKASWIGAKDTESSLSPSQSTLATPQYLRTQFSVEKEVLEARLYVTAKGVFKVYLNGKDITANDALPPGWTPYEKRIETLTYDVTTLITKRDNALGAIIAGGWYSGRIADLKETDHSKPPRFLAQLEITYSDNTTRLVTTNDSWKATQSGPIRFASNYDGERYDETYEMQGWSMPDYDDSEWGTVITDASTPGTLLRPKRHLPVRNVDKLTPLSFKQVSKDTVIFDFGQNMVGVPSIKLPVKQGKQVTLRFAEALHKGDFYTDNYRSAHSTDYFLPAKDGIAEYTPTFTFHGFRFVEISGFDETKAPVKNWIVANVQHSDIDLYNNFLSANPKLNKLFENINWGLKGNFFDIPLDCPQRDERLGWTGDANAFIAPSMYMADVYGFWSAYLNSLREEQTEDGFVPLYVPFVKWINWTSSGWGDAATILPWELYMMTGDQKILEDSYPSMKSWINYHDSQAKNNISSMMTFGDWLQPYPEAEGKGANRGDTDFSLISTAFFARSVALTRKTALELGFNEDAKRYEVKQKTLAKAFRAEFFDEDLNVIKGKETQTAYLLALAFDLLPQSEVNIAQTKLISLLQSADTHLRTGFLGTPLLADVLQEAGRTDLVYELLFKETYPSWFYSINNGATTTWERWNSYSLEEGFNPQGMNSLNHYAYGTISRWFYEGILGVKPQLPGFKKAIISPQLTSKLGFAEGSIPTPSGDIDVSWTMTSDGFDVSVTVPFNISAEFVPPAHYSVVAATNAKNEPIKKWKGLKAGQYQFQLIIDEKHGGAQ</sequence>
<comment type="function">
    <text evidence="3">Alpha-L-rhamnosidase involved in ulvan degradation. Ulvan is the main polysaccharide component of the Ulvales (green seaweed) cell wall. It is composed of disaccharide building blocks comprising 3-sulfated rhamnose (Rha3S) linked to D-glucuronic acid (GlcA), L-iduronic acid (IduA), or D-xylose (Xyl). The enzyme is able to degrade p-nitrophenyl-alpha-L-rhamnopyranoside (PNP-Rha) in vitro. Incubating the enzyme with the products obtained after degradation with ulvan lyase and beta-glucuronyl hydrolase (i.e. the trisaccharides beta-alpha-L-Rha3S-IduA-Rha3S and beta-alpha-L-Rha3S-GlcA-Rha3S) showed no degradation, suggesting that the enzyme is active on neutral rhamnose and that desulfation of the oligosaccharide must be achieved before cleavage of rhamnose.</text>
</comment>
<comment type="catalytic activity">
    <reaction evidence="3">
        <text>Hydrolysis of terminal non-reducing alpha-L-rhamnose residues in alpha-L-rhamnosides.</text>
        <dbReference type="EC" id="3.2.1.40"/>
    </reaction>
</comment>
<comment type="subcellular location">
    <subcellularLocation>
        <location evidence="2">Cell membrane</location>
        <topology evidence="2">Lipid-anchor</topology>
    </subcellularLocation>
</comment>
<comment type="similarity">
    <text evidence="4">Belongs to the glycosyl hydrolase 78 family.</text>
</comment>
<dbReference type="EC" id="3.2.1.40" evidence="3"/>
<dbReference type="RefSeq" id="WP_032096153.1">
    <property type="nucleotide sequence ID" value="NZ_JQFW01000010.1"/>
</dbReference>
<dbReference type="SMR" id="P9WF03"/>
<dbReference type="OrthoDB" id="9761045at2"/>
<dbReference type="GO" id="GO:0005886">
    <property type="term" value="C:plasma membrane"/>
    <property type="evidence" value="ECO:0007669"/>
    <property type="project" value="UniProtKB-SubCell"/>
</dbReference>
<dbReference type="GO" id="GO:0030596">
    <property type="term" value="F:alpha-L-rhamnosidase activity"/>
    <property type="evidence" value="ECO:0007669"/>
    <property type="project" value="UniProtKB-EC"/>
</dbReference>
<dbReference type="GO" id="GO:0005975">
    <property type="term" value="P:carbohydrate metabolic process"/>
    <property type="evidence" value="ECO:0007669"/>
    <property type="project" value="InterPro"/>
</dbReference>
<dbReference type="Gene3D" id="1.50.10.10">
    <property type="match status" value="1"/>
</dbReference>
<dbReference type="Gene3D" id="2.60.120.260">
    <property type="entry name" value="Galactose-binding domain-like"/>
    <property type="match status" value="2"/>
</dbReference>
<dbReference type="Gene3D" id="2.60.40.10">
    <property type="entry name" value="Immunoglobulins"/>
    <property type="match status" value="1"/>
</dbReference>
<dbReference type="Gene3D" id="2.60.420.10">
    <property type="entry name" value="Maltose phosphorylase, domain 3"/>
    <property type="match status" value="1"/>
</dbReference>
<dbReference type="InterPro" id="IPR008928">
    <property type="entry name" value="6-hairpin_glycosidase_sf"/>
</dbReference>
<dbReference type="InterPro" id="IPR012341">
    <property type="entry name" value="6hp_glycosidase-like_sf"/>
</dbReference>
<dbReference type="InterPro" id="IPR016007">
    <property type="entry name" value="Alpha_rhamnosid"/>
</dbReference>
<dbReference type="InterPro" id="IPR035396">
    <property type="entry name" value="Bac_rhamnosid6H"/>
</dbReference>
<dbReference type="InterPro" id="IPR035398">
    <property type="entry name" value="Bac_rhamnosid_C"/>
</dbReference>
<dbReference type="InterPro" id="IPR013737">
    <property type="entry name" value="Bac_rhamnosid_N"/>
</dbReference>
<dbReference type="InterPro" id="IPR013783">
    <property type="entry name" value="Ig-like_fold"/>
</dbReference>
<dbReference type="InterPro" id="IPR008902">
    <property type="entry name" value="Rhamnosid_concanavalin"/>
</dbReference>
<dbReference type="PANTHER" id="PTHR33307">
    <property type="entry name" value="ALPHA-RHAMNOSIDASE (EUROFUNG)"/>
    <property type="match status" value="1"/>
</dbReference>
<dbReference type="PANTHER" id="PTHR33307:SF6">
    <property type="entry name" value="ALPHA-RHAMNOSIDASE (EUROFUNG)-RELATED"/>
    <property type="match status" value="1"/>
</dbReference>
<dbReference type="Pfam" id="PF05592">
    <property type="entry name" value="Bac_rhamnosid"/>
    <property type="match status" value="1"/>
</dbReference>
<dbReference type="Pfam" id="PF17389">
    <property type="entry name" value="Bac_rhamnosid6H"/>
    <property type="match status" value="1"/>
</dbReference>
<dbReference type="Pfam" id="PF17390">
    <property type="entry name" value="Bac_rhamnosid_C"/>
    <property type="match status" value="1"/>
</dbReference>
<dbReference type="Pfam" id="PF08531">
    <property type="entry name" value="Bac_rhamnosid_N"/>
    <property type="match status" value="1"/>
</dbReference>
<dbReference type="PIRSF" id="PIRSF010631">
    <property type="entry name" value="A-rhamnsds"/>
    <property type="match status" value="1"/>
</dbReference>
<dbReference type="SUPFAM" id="SSF48208">
    <property type="entry name" value="Six-hairpin glycosidases"/>
    <property type="match status" value="1"/>
</dbReference>
<dbReference type="PROSITE" id="PS51257">
    <property type="entry name" value="PROKAR_LIPOPROTEIN"/>
    <property type="match status" value="1"/>
</dbReference>
<name>RHA78_ALTSL</name>
<evidence type="ECO:0000250" key="1">
    <source>
        <dbReference type="UniProtKB" id="Q82PP4"/>
    </source>
</evidence>
<evidence type="ECO:0000255" key="2">
    <source>
        <dbReference type="PROSITE-ProRule" id="PRU00303"/>
    </source>
</evidence>
<evidence type="ECO:0000269" key="3">
    <source ref="2"/>
</evidence>
<evidence type="ECO:0000305" key="4"/>
<protein>
    <recommendedName>
        <fullName evidence="4">Alpha-L-rhamnosidase</fullName>
        <ecNumber evidence="3">3.2.1.40</ecNumber>
    </recommendedName>
</protein>
<accession>P9WF03</accession>
<feature type="signal peptide" evidence="2">
    <location>
        <begin position="1"/>
        <end position="19"/>
    </location>
</feature>
<feature type="chain" id="PRO_0000448312" description="Alpha-L-rhamnosidase">
    <location>
        <begin position="20"/>
        <end position="920"/>
    </location>
</feature>
<feature type="active site" description="Proton donor" evidence="1">
    <location>
        <position position="506"/>
    </location>
</feature>
<feature type="active site" description="Proton acceptor" evidence="1">
    <location>
        <position position="779"/>
    </location>
</feature>
<feature type="binding site" evidence="1">
    <location>
        <position position="500"/>
    </location>
    <ligand>
        <name>alpha-L-rhamnose</name>
        <dbReference type="ChEBI" id="CHEBI:27907"/>
    </ligand>
</feature>
<feature type="binding site" evidence="1">
    <location>
        <begin position="504"/>
        <end position="506"/>
    </location>
    <ligand>
        <name>alpha-L-rhamnose</name>
        <dbReference type="ChEBI" id="CHEBI:27907"/>
    </ligand>
</feature>
<feature type="binding site" evidence="1">
    <location>
        <position position="513"/>
    </location>
    <ligand>
        <name>alpha-L-rhamnose</name>
        <dbReference type="ChEBI" id="CHEBI:27907"/>
    </ligand>
</feature>
<feature type="binding site" evidence="1">
    <location>
        <position position="565"/>
    </location>
    <ligand>
        <name>alpha-L-rhamnose</name>
        <dbReference type="ChEBI" id="CHEBI:27907"/>
    </ligand>
</feature>
<feature type="binding site" evidence="1">
    <location>
        <position position="800"/>
    </location>
    <ligand>
        <name>alpha-L-rhamnose</name>
        <dbReference type="ChEBI" id="CHEBI:27907"/>
    </ligand>
</feature>
<feature type="lipid moiety-binding region" description="N-palmitoyl cysteine" evidence="2">
    <location>
        <position position="20"/>
    </location>
</feature>
<feature type="lipid moiety-binding region" description="S-diacylglycerol cysteine" evidence="2">
    <location>
        <position position="20"/>
    </location>
</feature>
<reference key="1">
    <citation type="journal article" date="2014" name="Genome Announc.">
        <title>Draft genome sequences of two ulvan-degrading isolates, strains LTR and LOR, that belong to the Alteromonas genus.</title>
        <authorList>
            <person name="Kopel M."/>
            <person name="Helbert W."/>
            <person name="Henrissat B."/>
            <person name="Doniger T."/>
            <person name="Banin E."/>
        </authorList>
    </citation>
    <scope>NUCLEOTIDE SEQUENCE [LARGE SCALE GENOMIC DNA]</scope>
    <source>
        <strain>LOR</strain>
    </source>
</reference>
<reference key="2">
    <citation type="journal article" date="2017" name="Algal Res.">
        <title>Functional characterization of a novel 'ulvan utilization loci' found in Alteromonas sp. LOR genome.</title>
        <authorList>
            <person name="Foran E."/>
            <person name="Buravenkov V."/>
            <person name="Kopel M."/>
            <person name="Mizrahi N."/>
            <person name="Shoshani S."/>
            <person name="Helbert W."/>
            <person name="Banin E."/>
        </authorList>
    </citation>
    <scope>FUNCTION</scope>
    <scope>CATALYTIC ACTIVITY</scope>
</reference>
<keyword id="KW-1003">Cell membrane</keyword>
<keyword id="KW-0378">Hydrolase</keyword>
<keyword id="KW-0449">Lipoprotein</keyword>
<keyword id="KW-0472">Membrane</keyword>
<keyword id="KW-0564">Palmitate</keyword>
<keyword id="KW-0732">Signal</keyword>